<organism>
    <name type="scientific">Flavobacterium johnsoniae (strain ATCC 17061 / DSM 2064 / JCM 8514 / BCRC 14874 / CCUG 350202 / NBRC 14942 / NCIMB 11054 / UW101)</name>
    <name type="common">Cytophaga johnsonae</name>
    <dbReference type="NCBI Taxonomy" id="376686"/>
    <lineage>
        <taxon>Bacteria</taxon>
        <taxon>Pseudomonadati</taxon>
        <taxon>Bacteroidota</taxon>
        <taxon>Flavobacteriia</taxon>
        <taxon>Flavobacteriales</taxon>
        <taxon>Flavobacteriaceae</taxon>
        <taxon>Flavobacterium</taxon>
    </lineage>
</organism>
<name>NUOD_FLAJ1</name>
<keyword id="KW-0997">Cell inner membrane</keyword>
<keyword id="KW-1003">Cell membrane</keyword>
<keyword id="KW-0472">Membrane</keyword>
<keyword id="KW-0520">NAD</keyword>
<keyword id="KW-0874">Quinone</keyword>
<keyword id="KW-1278">Translocase</keyword>
<keyword id="KW-0813">Transport</keyword>
<comment type="function">
    <text evidence="1">NDH-1 shuttles electrons from NADH, via FMN and iron-sulfur (Fe-S) centers, to quinones in the respiratory chain. The immediate electron acceptor for the enzyme in this species is believed to be a menaquinone. Couples the redox reaction to proton translocation (for every two electrons transferred, four hydrogen ions are translocated across the cytoplasmic membrane), and thus conserves the redox energy in a proton gradient.</text>
</comment>
<comment type="catalytic activity">
    <reaction evidence="1">
        <text>a quinone + NADH + 5 H(+)(in) = a quinol + NAD(+) + 4 H(+)(out)</text>
        <dbReference type="Rhea" id="RHEA:57888"/>
        <dbReference type="ChEBI" id="CHEBI:15378"/>
        <dbReference type="ChEBI" id="CHEBI:24646"/>
        <dbReference type="ChEBI" id="CHEBI:57540"/>
        <dbReference type="ChEBI" id="CHEBI:57945"/>
        <dbReference type="ChEBI" id="CHEBI:132124"/>
    </reaction>
</comment>
<comment type="subunit">
    <text evidence="1">NDH-1 is composed of 14 different subunits. Subunits NuoB, C, D, E, F, and G constitute the peripheral sector of the complex.</text>
</comment>
<comment type="subcellular location">
    <subcellularLocation>
        <location evidence="1">Cell inner membrane</location>
        <topology evidence="1">Peripheral membrane protein</topology>
        <orientation evidence="1">Cytoplasmic side</orientation>
    </subcellularLocation>
</comment>
<comment type="similarity">
    <text evidence="1">Belongs to the complex I 49 kDa subunit family.</text>
</comment>
<accession>A5FKI7</accession>
<evidence type="ECO:0000255" key="1">
    <source>
        <dbReference type="HAMAP-Rule" id="MF_01358"/>
    </source>
</evidence>
<dbReference type="EC" id="7.1.1.-" evidence="1"/>
<dbReference type="EMBL" id="CP000685">
    <property type="protein sequence ID" value="ABQ04275.1"/>
    <property type="molecule type" value="Genomic_DNA"/>
</dbReference>
<dbReference type="RefSeq" id="WP_012023325.1">
    <property type="nucleotide sequence ID" value="NC_009441.1"/>
</dbReference>
<dbReference type="SMR" id="A5FKI7"/>
<dbReference type="STRING" id="376686.Fjoh_1243"/>
<dbReference type="KEGG" id="fjo:Fjoh_1243"/>
<dbReference type="eggNOG" id="COG0649">
    <property type="taxonomic scope" value="Bacteria"/>
</dbReference>
<dbReference type="HOGENOM" id="CLU_015134_1_2_10"/>
<dbReference type="OrthoDB" id="9801496at2"/>
<dbReference type="Proteomes" id="UP000006694">
    <property type="component" value="Chromosome"/>
</dbReference>
<dbReference type="GO" id="GO:0005886">
    <property type="term" value="C:plasma membrane"/>
    <property type="evidence" value="ECO:0007669"/>
    <property type="project" value="UniProtKB-SubCell"/>
</dbReference>
<dbReference type="GO" id="GO:0051287">
    <property type="term" value="F:NAD binding"/>
    <property type="evidence" value="ECO:0007669"/>
    <property type="project" value="InterPro"/>
</dbReference>
<dbReference type="GO" id="GO:0050136">
    <property type="term" value="F:NADH:ubiquinone reductase (non-electrogenic) activity"/>
    <property type="evidence" value="ECO:0007669"/>
    <property type="project" value="UniProtKB-UniRule"/>
</dbReference>
<dbReference type="GO" id="GO:0048038">
    <property type="term" value="F:quinone binding"/>
    <property type="evidence" value="ECO:0007669"/>
    <property type="project" value="UniProtKB-KW"/>
</dbReference>
<dbReference type="Gene3D" id="1.10.645.10">
    <property type="entry name" value="Cytochrome-c3 Hydrogenase, chain B"/>
    <property type="match status" value="1"/>
</dbReference>
<dbReference type="HAMAP" id="MF_01358">
    <property type="entry name" value="NDH1_NuoD"/>
    <property type="match status" value="1"/>
</dbReference>
<dbReference type="InterPro" id="IPR001135">
    <property type="entry name" value="NADH_Q_OxRdtase_suD"/>
</dbReference>
<dbReference type="InterPro" id="IPR014029">
    <property type="entry name" value="NADH_UbQ_OxRdtase_49kDa_CS"/>
</dbReference>
<dbReference type="InterPro" id="IPR022885">
    <property type="entry name" value="NDH1_su_D/H"/>
</dbReference>
<dbReference type="InterPro" id="IPR029014">
    <property type="entry name" value="NiFe-Hase_large"/>
</dbReference>
<dbReference type="NCBIfam" id="NF004739">
    <property type="entry name" value="PRK06075.1"/>
    <property type="match status" value="1"/>
</dbReference>
<dbReference type="PANTHER" id="PTHR11993:SF10">
    <property type="entry name" value="NADH DEHYDROGENASE [UBIQUINONE] IRON-SULFUR PROTEIN 2, MITOCHONDRIAL"/>
    <property type="match status" value="1"/>
</dbReference>
<dbReference type="PANTHER" id="PTHR11993">
    <property type="entry name" value="NADH-UBIQUINONE OXIDOREDUCTASE 49 KDA SUBUNIT"/>
    <property type="match status" value="1"/>
</dbReference>
<dbReference type="Pfam" id="PF00346">
    <property type="entry name" value="Complex1_49kDa"/>
    <property type="match status" value="1"/>
</dbReference>
<dbReference type="SUPFAM" id="SSF56762">
    <property type="entry name" value="HydB/Nqo4-like"/>
    <property type="match status" value="1"/>
</dbReference>
<dbReference type="PROSITE" id="PS00535">
    <property type="entry name" value="COMPLEX1_49K"/>
    <property type="match status" value="1"/>
</dbReference>
<reference key="1">
    <citation type="journal article" date="2009" name="Appl. Environ. Microbiol.">
        <title>Novel features of the polysaccharide-digesting gliding bacterium Flavobacterium johnsoniae as revealed by genome sequence analysis.</title>
        <authorList>
            <person name="McBride M.J."/>
            <person name="Xie G."/>
            <person name="Martens E.C."/>
            <person name="Lapidus A."/>
            <person name="Henrissat B."/>
            <person name="Rhodes R.G."/>
            <person name="Goltsman E."/>
            <person name="Wang W."/>
            <person name="Xu J."/>
            <person name="Hunnicutt D.W."/>
            <person name="Staroscik A.M."/>
            <person name="Hoover T.R."/>
            <person name="Cheng Y.Q."/>
            <person name="Stein J.L."/>
        </authorList>
    </citation>
    <scope>NUCLEOTIDE SEQUENCE [LARGE SCALE GENOMIC DNA]</scope>
    <source>
        <strain>ATCC 17061 / DSM 2064 / JCM 8514 / BCRC 14874 / CCUG 350202 / NBRC 14942 / NCIMB 11054 / UW101</strain>
    </source>
</reference>
<feature type="chain" id="PRO_0000357814" description="NADH-quinone oxidoreductase subunit D">
    <location>
        <begin position="1"/>
        <end position="412"/>
    </location>
</feature>
<proteinExistence type="inferred from homology"/>
<gene>
    <name evidence="1" type="primary">nuoD</name>
    <name type="ordered locus">Fjoh_1243</name>
</gene>
<sequence>MSELLLPPEHRYAKIIKERHNEDGSELSVLNLGPTHPATHGIFQNILLMDGERILEAEPTIGYIHRAFEKIAENRPFYQITPLTDRMNYCSSPINNMGWWMTLEKLLGIEVPKRAQYLRVIVMELARITDHIICNSILGVDTGAYTGFLYVFQFREKIYEIYEEICGARLTTNMGRIGGFERDWSPEAFRKLDKFLEEFPPAWKEFENLFERNRIFLDRTVNVGGITAEKAMAYGFTGPNLRAAGVDYDVRVAHPYSSYEDFDFIVPVGKSGDTYDRFCVRNAEVWESLSIIRQALEKMPAGNEYHAEVPDYYLPPKEDVYNSMESLIYHFKIVMGEVPVPVSEIYHAVEGGNGELGFYLATDGSRTPYRLHFRRPCFIYYQAFPEMIKGALLSDAIIILSSLNVIAGELDA</sequence>
<protein>
    <recommendedName>
        <fullName evidence="1">NADH-quinone oxidoreductase subunit D</fullName>
        <ecNumber evidence="1">7.1.1.-</ecNumber>
    </recommendedName>
    <alternativeName>
        <fullName evidence="1">NADH dehydrogenase I subunit D</fullName>
    </alternativeName>
    <alternativeName>
        <fullName evidence="1">NDH-1 subunit D</fullName>
    </alternativeName>
</protein>